<reference key="1">
    <citation type="journal article" date="1989" name="Genetics">
        <title>DNA sequence analysis of artificially evolved ebg enzyme and ebg repressor genes.</title>
        <authorList>
            <person name="Hall B.G."/>
            <person name="Betts P.W."/>
            <person name="Wootton J.C."/>
        </authorList>
    </citation>
    <scope>NUCLEOTIDE SEQUENCE [GENOMIC DNA]</scope>
</reference>
<reference key="2">
    <citation type="journal article" date="1997" name="Science">
        <title>The complete genome sequence of Escherichia coli K-12.</title>
        <authorList>
            <person name="Blattner F.R."/>
            <person name="Plunkett G. III"/>
            <person name="Bloch C.A."/>
            <person name="Perna N.T."/>
            <person name="Burland V."/>
            <person name="Riley M."/>
            <person name="Collado-Vides J."/>
            <person name="Glasner J.D."/>
            <person name="Rode C.K."/>
            <person name="Mayhew G.F."/>
            <person name="Gregor J."/>
            <person name="Davis N.W."/>
            <person name="Kirkpatrick H.A."/>
            <person name="Goeden M.A."/>
            <person name="Rose D.J."/>
            <person name="Mau B."/>
            <person name="Shao Y."/>
        </authorList>
    </citation>
    <scope>NUCLEOTIDE SEQUENCE [LARGE SCALE GENOMIC DNA]</scope>
    <source>
        <strain>K12 / MG1655 / ATCC 47076</strain>
    </source>
</reference>
<reference key="3">
    <citation type="journal article" date="2006" name="Mol. Syst. Biol.">
        <title>Highly accurate genome sequences of Escherichia coli K-12 strains MG1655 and W3110.</title>
        <authorList>
            <person name="Hayashi K."/>
            <person name="Morooka N."/>
            <person name="Yamamoto Y."/>
            <person name="Fujita K."/>
            <person name="Isono K."/>
            <person name="Choi S."/>
            <person name="Ohtsubo E."/>
            <person name="Baba T."/>
            <person name="Wanner B.L."/>
            <person name="Mori H."/>
            <person name="Horiuchi T."/>
        </authorList>
    </citation>
    <scope>NUCLEOTIDE SEQUENCE [LARGE SCALE GENOMIC DNA]</scope>
    <source>
        <strain>K12 / W3110 / ATCC 27325 / DSM 5911</strain>
    </source>
</reference>
<reference key="4">
    <citation type="journal article" date="1992" name="Biochem. J.">
        <title>The catalytic consequences of experimental evolution. Studies on the subunit structure of the second (ebg) beta-galactosidase of Escherichia coli, and on catalysis by ebgab, an experimental evolvant containing two amino acid substitutions.</title>
        <authorList>
            <person name="Elliott A.C."/>
            <person name="Sinnott M.L."/>
            <person name="Smith P.J."/>
            <person name="Bommuswamy J."/>
            <person name="Guo Z."/>
            <person name="Hall B.G."/>
            <person name="Zhang Y."/>
        </authorList>
    </citation>
    <scope>SUBUNIT</scope>
</reference>
<keyword id="KW-1185">Reference proteome</keyword>
<sequence>MRIIDNLEQFRQIYASGKKWQRCVEAIENIDNIQPGVAHSIGDSLTYRVETDSATDALFTGHRRYFEVHYYLQGQQKIEYAPKETLQVVEYYRDETDREYLKGCGETVEVHEGQIVICDIHEAYRFICNNAVKKVVLKVTIEDGYFHNK</sequence>
<evidence type="ECO:0000269" key="1">
    <source>
    </source>
</evidence>
<evidence type="ECO:0000305" key="2"/>
<organism>
    <name type="scientific">Escherichia coli (strain K12)</name>
    <dbReference type="NCBI Taxonomy" id="83333"/>
    <lineage>
        <taxon>Bacteria</taxon>
        <taxon>Pseudomonadati</taxon>
        <taxon>Pseudomonadota</taxon>
        <taxon>Gammaproteobacteria</taxon>
        <taxon>Enterobacterales</taxon>
        <taxon>Enterobacteriaceae</taxon>
        <taxon>Escherichia</taxon>
    </lineage>
</organism>
<dbReference type="EMBL" id="M64441">
    <property type="protein sequence ID" value="AAA61972.1"/>
    <property type="molecule type" value="Genomic_DNA"/>
</dbReference>
<dbReference type="EMBL" id="X52031">
    <property type="protein sequence ID" value="CAA36275.1"/>
    <property type="molecule type" value="Genomic_DNA"/>
</dbReference>
<dbReference type="EMBL" id="U18997">
    <property type="protein sequence ID" value="AAA57878.1"/>
    <property type="molecule type" value="Genomic_DNA"/>
</dbReference>
<dbReference type="EMBL" id="U00096">
    <property type="protein sequence ID" value="AAC76112.1"/>
    <property type="molecule type" value="Genomic_DNA"/>
</dbReference>
<dbReference type="EMBL" id="AP009048">
    <property type="protein sequence ID" value="BAE77127.1"/>
    <property type="molecule type" value="Genomic_DNA"/>
</dbReference>
<dbReference type="PIR" id="B65096">
    <property type="entry name" value="B65096"/>
</dbReference>
<dbReference type="RefSeq" id="NP_417548.1">
    <property type="nucleotide sequence ID" value="NC_000913.3"/>
</dbReference>
<dbReference type="RefSeq" id="WP_001219954.1">
    <property type="nucleotide sequence ID" value="NZ_STEB01000001.1"/>
</dbReference>
<dbReference type="SMR" id="P0AC73"/>
<dbReference type="BioGRID" id="4262400">
    <property type="interactions" value="10"/>
</dbReference>
<dbReference type="BioGRID" id="851897">
    <property type="interactions" value="1"/>
</dbReference>
<dbReference type="DIP" id="DIP-2894N"/>
<dbReference type="FunCoup" id="P0AC73">
    <property type="interactions" value="57"/>
</dbReference>
<dbReference type="IntAct" id="P0AC73">
    <property type="interactions" value="6"/>
</dbReference>
<dbReference type="STRING" id="511145.b3077"/>
<dbReference type="PaxDb" id="511145-b3077"/>
<dbReference type="EnsemblBacteria" id="AAC76112">
    <property type="protein sequence ID" value="AAC76112"/>
    <property type="gene ID" value="b3077"/>
</dbReference>
<dbReference type="GeneID" id="947581"/>
<dbReference type="KEGG" id="ecj:JW3048"/>
<dbReference type="KEGG" id="eco:b3077"/>
<dbReference type="KEGG" id="ecoc:C3026_16805"/>
<dbReference type="PATRIC" id="fig|1411691.4.peg.3653"/>
<dbReference type="EchoBASE" id="EB0249"/>
<dbReference type="eggNOG" id="COG2731">
    <property type="taxonomic scope" value="Bacteria"/>
</dbReference>
<dbReference type="HOGENOM" id="CLU_146670_0_0_6"/>
<dbReference type="InParanoid" id="P0AC73"/>
<dbReference type="OMA" id="KWNRCVE"/>
<dbReference type="OrthoDB" id="8776070at2"/>
<dbReference type="BioCyc" id="EcoCyc:EG10253-MONOMER"/>
<dbReference type="SABIO-RK" id="P0AC73"/>
<dbReference type="PRO" id="PR:P0AC73"/>
<dbReference type="Proteomes" id="UP000000625">
    <property type="component" value="Chromosome"/>
</dbReference>
<dbReference type="GO" id="GO:0005829">
    <property type="term" value="C:cytosol"/>
    <property type="evidence" value="ECO:0000318"/>
    <property type="project" value="GO_Central"/>
</dbReference>
<dbReference type="GO" id="GO:0044010">
    <property type="term" value="P:single-species biofilm formation"/>
    <property type="evidence" value="ECO:0000318"/>
    <property type="project" value="GO_Central"/>
</dbReference>
<dbReference type="Gene3D" id="2.60.120.370">
    <property type="entry name" value="YhcH/YjgK/YiaL"/>
    <property type="match status" value="1"/>
</dbReference>
<dbReference type="InterPro" id="IPR004375">
    <property type="entry name" value="NanQ/TabA/YiaL"/>
</dbReference>
<dbReference type="InterPro" id="IPR037012">
    <property type="entry name" value="NanQ/TabA/YiaL_sf"/>
</dbReference>
<dbReference type="NCBIfam" id="NF007571">
    <property type="entry name" value="PRK10202.1"/>
    <property type="match status" value="1"/>
</dbReference>
<dbReference type="PANTHER" id="PTHR34986">
    <property type="entry name" value="EVOLVED BETA-GALACTOSIDASE SUBUNIT BETA"/>
    <property type="match status" value="1"/>
</dbReference>
<dbReference type="PANTHER" id="PTHR34986:SF4">
    <property type="entry name" value="EVOLVED BETA-GALACTOSIDASE SUBUNIT BETA-RELATED"/>
    <property type="match status" value="1"/>
</dbReference>
<dbReference type="Pfam" id="PF04074">
    <property type="entry name" value="DUF386"/>
    <property type="match status" value="1"/>
</dbReference>
<dbReference type="SUPFAM" id="SSF51197">
    <property type="entry name" value="Clavaminate synthase-like"/>
    <property type="match status" value="1"/>
</dbReference>
<protein>
    <recommendedName>
        <fullName>Evolved beta-galactosidase subunit beta</fullName>
    </recommendedName>
</protein>
<accession>P0AC73</accession>
<accession>P24225</accession>
<accession>Q2M9C9</accession>
<feature type="chain" id="PRO_0000057652" description="Evolved beta-galactosidase subunit beta">
    <location>
        <begin position="1"/>
        <end position="149"/>
    </location>
</feature>
<feature type="sequence conflict" description="In Ref. 1; AAA61972/CAA36275." evidence="2" ref="1">
    <original>GYFHNK</original>
    <variation>VISITNNNYGGKRSLPPPLPYSFSEMCYV</variation>
    <location>
        <begin position="144"/>
        <end position="149"/>
    </location>
</feature>
<name>EBGC_ECOLI</name>
<proteinExistence type="evidence at protein level"/>
<gene>
    <name type="primary">ebgC</name>
    <name type="ordered locus">b3077</name>
    <name type="ordered locus">JW3048</name>
</gene>
<comment type="function">
    <text>Required for full activity of the EbgA enzyme. Exact function not known.</text>
</comment>
<comment type="subunit">
    <text evidence="1">Heterooctamer of 4 alpha and 4 beta subunits.</text>
</comment>